<feature type="chain" id="PRO_1000072915" description="tRNA/tmRNA (uracil-C(5))-methyltransferase">
    <location>
        <begin position="1"/>
        <end position="366"/>
    </location>
</feature>
<feature type="active site" description="Nucleophile" evidence="1">
    <location>
        <position position="323"/>
    </location>
</feature>
<feature type="active site" description="Proton acceptor" evidence="1">
    <location>
        <position position="357"/>
    </location>
</feature>
<feature type="binding site" evidence="1">
    <location>
        <position position="189"/>
    </location>
    <ligand>
        <name>S-adenosyl-L-methionine</name>
        <dbReference type="ChEBI" id="CHEBI:59789"/>
    </ligand>
</feature>
<feature type="binding site" evidence="1">
    <location>
        <position position="217"/>
    </location>
    <ligand>
        <name>S-adenosyl-L-methionine</name>
        <dbReference type="ChEBI" id="CHEBI:59789"/>
    </ligand>
</feature>
<feature type="binding site" evidence="1">
    <location>
        <position position="222"/>
    </location>
    <ligand>
        <name>S-adenosyl-L-methionine</name>
        <dbReference type="ChEBI" id="CHEBI:59789"/>
    </ligand>
</feature>
<feature type="binding site" evidence="1">
    <location>
        <position position="238"/>
    </location>
    <ligand>
        <name>S-adenosyl-L-methionine</name>
        <dbReference type="ChEBI" id="CHEBI:59789"/>
    </ligand>
</feature>
<feature type="binding site" evidence="1">
    <location>
        <position position="298"/>
    </location>
    <ligand>
        <name>S-adenosyl-L-methionine</name>
        <dbReference type="ChEBI" id="CHEBI:59789"/>
    </ligand>
</feature>
<comment type="function">
    <text evidence="1">Dual-specificity methyltransferase that catalyzes the formation of 5-methyluridine at position 54 (m5U54) in all tRNAs, and that of position 341 (m5U341) in tmRNA (transfer-mRNA).</text>
</comment>
<comment type="catalytic activity">
    <reaction evidence="1">
        <text>uridine(54) in tRNA + S-adenosyl-L-methionine = 5-methyluridine(54) in tRNA + S-adenosyl-L-homocysteine + H(+)</text>
        <dbReference type="Rhea" id="RHEA:42712"/>
        <dbReference type="Rhea" id="RHEA-COMP:10167"/>
        <dbReference type="Rhea" id="RHEA-COMP:10193"/>
        <dbReference type="ChEBI" id="CHEBI:15378"/>
        <dbReference type="ChEBI" id="CHEBI:57856"/>
        <dbReference type="ChEBI" id="CHEBI:59789"/>
        <dbReference type="ChEBI" id="CHEBI:65315"/>
        <dbReference type="ChEBI" id="CHEBI:74447"/>
        <dbReference type="EC" id="2.1.1.35"/>
    </reaction>
</comment>
<comment type="catalytic activity">
    <reaction evidence="1">
        <text>uridine(341) in tmRNA + S-adenosyl-L-methionine = 5-methyluridine(341) in tmRNA + S-adenosyl-L-homocysteine + H(+)</text>
        <dbReference type="Rhea" id="RHEA:43612"/>
        <dbReference type="Rhea" id="RHEA-COMP:10630"/>
        <dbReference type="Rhea" id="RHEA-COMP:10631"/>
        <dbReference type="ChEBI" id="CHEBI:15378"/>
        <dbReference type="ChEBI" id="CHEBI:57856"/>
        <dbReference type="ChEBI" id="CHEBI:59789"/>
        <dbReference type="ChEBI" id="CHEBI:65315"/>
        <dbReference type="ChEBI" id="CHEBI:74447"/>
    </reaction>
</comment>
<comment type="similarity">
    <text evidence="1">Belongs to the class I-like SAM-binding methyltransferase superfamily. RNA M5U methyltransferase family. TrmA subfamily.</text>
</comment>
<sequence length="366" mass="42088">MNLAAMDPQTYDAQLEHKRIKLEQAFAQFETPSVEVFASEPANYRMRAEFRMWHDGDDLYYYMFDKVLNEKVRCDQYLPASVLINQMMSALIAELKPNPSLRHKLFQVDFLSTLSGEILVSLLYHRQLDDQWRTNAAALKAKLSSQFNVNIIGRARKQKIDLDKDFVVESLQVNDKTFLYKQIENSFTQPNAKVAVKMLEWAIDVTQDSQGDLLELYCGNGNFSIALAQNFNRVLATELAKPSVEAAQYNIEANGIKNLQIIRMSAEDFSDAMAKKRSFRRLEGIDLDSYVCNTIFVDPPRAGIDPDTLALVQGYERILYISCNPDTLKDNLEQLYKTHRVTQFALFDQFPYTDHMETGVLLERTQ</sequence>
<gene>
    <name evidence="1" type="primary">trmA</name>
    <name type="ordered locus">Sputcn32_3510</name>
</gene>
<evidence type="ECO:0000255" key="1">
    <source>
        <dbReference type="HAMAP-Rule" id="MF_01011"/>
    </source>
</evidence>
<name>TRMA_SHEPC</name>
<protein>
    <recommendedName>
        <fullName evidence="1">tRNA/tmRNA (uracil-C(5))-methyltransferase</fullName>
        <ecNumber evidence="1">2.1.1.-</ecNumber>
        <ecNumber evidence="1">2.1.1.35</ecNumber>
    </recommendedName>
    <alternativeName>
        <fullName evidence="1">tRNA (uracil(54)-C(5))-methyltransferase</fullName>
    </alternativeName>
    <alternativeName>
        <fullName evidence="1">tRNA(m5U54)-methyltransferase</fullName>
        <shortName evidence="1">RUMT</shortName>
    </alternativeName>
    <alternativeName>
        <fullName evidence="1">tmRNA (uracil(341)-C(5))-methyltransferase</fullName>
    </alternativeName>
</protein>
<accession>A4YB86</accession>
<dbReference type="EC" id="2.1.1.-" evidence="1"/>
<dbReference type="EC" id="2.1.1.35" evidence="1"/>
<dbReference type="EMBL" id="CP000681">
    <property type="protein sequence ID" value="ABP77219.1"/>
    <property type="molecule type" value="Genomic_DNA"/>
</dbReference>
<dbReference type="SMR" id="A4YB86"/>
<dbReference type="STRING" id="319224.Sputcn32_3510"/>
<dbReference type="KEGG" id="spc:Sputcn32_3510"/>
<dbReference type="eggNOG" id="COG2265">
    <property type="taxonomic scope" value="Bacteria"/>
</dbReference>
<dbReference type="HOGENOM" id="CLU_043022_0_0_6"/>
<dbReference type="GO" id="GO:0005829">
    <property type="term" value="C:cytosol"/>
    <property type="evidence" value="ECO:0007669"/>
    <property type="project" value="TreeGrafter"/>
</dbReference>
<dbReference type="GO" id="GO:0019843">
    <property type="term" value="F:rRNA binding"/>
    <property type="evidence" value="ECO:0007669"/>
    <property type="project" value="TreeGrafter"/>
</dbReference>
<dbReference type="GO" id="GO:0030697">
    <property type="term" value="F:tRNA (uracil(54)-C5)-methyltransferase activity, S-adenosyl methionine-dependent"/>
    <property type="evidence" value="ECO:0007669"/>
    <property type="project" value="UniProtKB-UniRule"/>
</dbReference>
<dbReference type="GO" id="GO:0000049">
    <property type="term" value="F:tRNA binding"/>
    <property type="evidence" value="ECO:0007669"/>
    <property type="project" value="TreeGrafter"/>
</dbReference>
<dbReference type="GO" id="GO:0030488">
    <property type="term" value="P:tRNA methylation"/>
    <property type="evidence" value="ECO:0007669"/>
    <property type="project" value="UniProtKB-UniRule"/>
</dbReference>
<dbReference type="CDD" id="cd02440">
    <property type="entry name" value="AdoMet_MTases"/>
    <property type="match status" value="1"/>
</dbReference>
<dbReference type="FunFam" id="2.40.50.1070:FF:000001">
    <property type="entry name" value="tRNA/tmRNA (uracil-C(5))-methyltransferase"/>
    <property type="match status" value="1"/>
</dbReference>
<dbReference type="FunFam" id="3.40.50.150:FF:000012">
    <property type="entry name" value="tRNA/tmRNA (uracil-C(5))-methyltransferase"/>
    <property type="match status" value="1"/>
</dbReference>
<dbReference type="Gene3D" id="2.40.50.1070">
    <property type="match status" value="1"/>
</dbReference>
<dbReference type="Gene3D" id="3.40.50.150">
    <property type="entry name" value="Vaccinia Virus protein VP39"/>
    <property type="match status" value="1"/>
</dbReference>
<dbReference type="HAMAP" id="MF_01011">
    <property type="entry name" value="RNA_methyltr_TrmA"/>
    <property type="match status" value="1"/>
</dbReference>
<dbReference type="InterPro" id="IPR030390">
    <property type="entry name" value="MeTrfase_TrmA_AS"/>
</dbReference>
<dbReference type="InterPro" id="IPR030391">
    <property type="entry name" value="MeTrfase_TrmA_CS"/>
</dbReference>
<dbReference type="InterPro" id="IPR029063">
    <property type="entry name" value="SAM-dependent_MTases_sf"/>
</dbReference>
<dbReference type="InterPro" id="IPR011869">
    <property type="entry name" value="TrmA_MeTrfase"/>
</dbReference>
<dbReference type="InterPro" id="IPR010280">
    <property type="entry name" value="U5_MeTrfase_fam"/>
</dbReference>
<dbReference type="NCBIfam" id="TIGR02143">
    <property type="entry name" value="trmA_only"/>
    <property type="match status" value="1"/>
</dbReference>
<dbReference type="PANTHER" id="PTHR47790">
    <property type="entry name" value="TRNA/TMRNA (URACIL-C(5))-METHYLTRANSFERASE"/>
    <property type="match status" value="1"/>
</dbReference>
<dbReference type="PANTHER" id="PTHR47790:SF2">
    <property type="entry name" value="TRNA_TMRNA (URACIL-C(5))-METHYLTRANSFERASE"/>
    <property type="match status" value="1"/>
</dbReference>
<dbReference type="Pfam" id="PF05958">
    <property type="entry name" value="tRNA_U5-meth_tr"/>
    <property type="match status" value="1"/>
</dbReference>
<dbReference type="SUPFAM" id="SSF53335">
    <property type="entry name" value="S-adenosyl-L-methionine-dependent methyltransferases"/>
    <property type="match status" value="1"/>
</dbReference>
<dbReference type="PROSITE" id="PS51687">
    <property type="entry name" value="SAM_MT_RNA_M5U"/>
    <property type="match status" value="1"/>
</dbReference>
<dbReference type="PROSITE" id="PS01230">
    <property type="entry name" value="TRMA_1"/>
    <property type="match status" value="1"/>
</dbReference>
<dbReference type="PROSITE" id="PS01231">
    <property type="entry name" value="TRMA_2"/>
    <property type="match status" value="1"/>
</dbReference>
<proteinExistence type="inferred from homology"/>
<reference key="1">
    <citation type="submission" date="2007-04" db="EMBL/GenBank/DDBJ databases">
        <title>Complete sequence of Shewanella putrefaciens CN-32.</title>
        <authorList>
            <consortium name="US DOE Joint Genome Institute"/>
            <person name="Copeland A."/>
            <person name="Lucas S."/>
            <person name="Lapidus A."/>
            <person name="Barry K."/>
            <person name="Detter J.C."/>
            <person name="Glavina del Rio T."/>
            <person name="Hammon N."/>
            <person name="Israni S."/>
            <person name="Dalin E."/>
            <person name="Tice H."/>
            <person name="Pitluck S."/>
            <person name="Chain P."/>
            <person name="Malfatti S."/>
            <person name="Shin M."/>
            <person name="Vergez L."/>
            <person name="Schmutz J."/>
            <person name="Larimer F."/>
            <person name="Land M."/>
            <person name="Hauser L."/>
            <person name="Kyrpides N."/>
            <person name="Mikhailova N."/>
            <person name="Romine M.F."/>
            <person name="Fredrickson J."/>
            <person name="Tiedje J."/>
            <person name="Richardson P."/>
        </authorList>
    </citation>
    <scope>NUCLEOTIDE SEQUENCE [LARGE SCALE GENOMIC DNA]</scope>
    <source>
        <strain>CN-32 / ATCC BAA-453</strain>
    </source>
</reference>
<organism>
    <name type="scientific">Shewanella putrefaciens (strain CN-32 / ATCC BAA-453)</name>
    <dbReference type="NCBI Taxonomy" id="319224"/>
    <lineage>
        <taxon>Bacteria</taxon>
        <taxon>Pseudomonadati</taxon>
        <taxon>Pseudomonadota</taxon>
        <taxon>Gammaproteobacteria</taxon>
        <taxon>Alteromonadales</taxon>
        <taxon>Shewanellaceae</taxon>
        <taxon>Shewanella</taxon>
    </lineage>
</organism>
<keyword id="KW-0489">Methyltransferase</keyword>
<keyword id="KW-0949">S-adenosyl-L-methionine</keyword>
<keyword id="KW-0808">Transferase</keyword>
<keyword id="KW-0819">tRNA processing</keyword>